<accession>Q2H0S9</accession>
<keyword id="KW-0131">Cell cycle</keyword>
<keyword id="KW-0132">Cell division</keyword>
<keyword id="KW-0963">Cytoplasm</keyword>
<keyword id="KW-0206">Cytoskeleton</keyword>
<keyword id="KW-0493">Microtubule</keyword>
<keyword id="KW-0498">Mitosis</keyword>
<keyword id="KW-0539">Nucleus</keyword>
<keyword id="KW-1185">Reference proteome</keyword>
<keyword id="KW-0677">Repeat</keyword>
<proteinExistence type="inferred from homology"/>
<gene>
    <name type="primary">STU1</name>
    <name type="ORF">CHGG_04617</name>
</gene>
<protein>
    <recommendedName>
        <fullName>Protein STU1</fullName>
    </recommendedName>
</protein>
<sequence length="1111" mass="120187">MSEILTDDQVANLIALLRADVSIDTKVQQVTVVKSSIKQHMVPESCIVPVFEALHLASSSQHALLVNAGFTALNHLFTRLVRQDPRSLTKEGTRALPLIVEKLGDQKEKFRQLASQALATLYKVAPVEVERSVRNIAMVGKNARAKEASLHWLLQMHQEQGLQFRAYVPTMMELLEDADGMVRDVAKSTVIELFRNAPGPAKSDLKKQLKNFKVRPAIEQAIVKELNPTSSAPASQPDPESVEPSYVNTTRELDEIFREMHGYFEGKETEQNWLKREESVTKLRRLIAGNAATDFHDQFLTGLRALLDGIIKAVVSLRTSLSKEGCSLIQEIAKAYGPAMDPMVEILMQTFIKLTAATKKIASAQANTTVDTIISKVTYNNRIMQHVWLACQDKNVQPRLYASGWLRTLLAKEAHHKNHVEHTGGLDLIEKCIKKGLSDANPGVREKMRATYWMFAGVWPAKAEAIMNGLDSTAARLLQNDPNNPKSPKKPEGGARPGLGLSKSTMGTSKPSVREAMMAQKRAMTTKTVPTRPGSAMSHFSPAKSVSSLSQPPPAAPTVRARPESAMLGSTGGISGAPMRPGRRKVETARPATAGPYSVRSHDQPSAEQTSPPSRPKPKAVTPKSITSSPKRTAPKMARSATVSGEPQLPTPTRAGSPKVMGSPRATPSRSVPPTVAPPSSSPSKRHEDFSLVVPIMTSSASPPREEQRFVKPVEDEDMDMSPSDTPSKPGQHSPDAPASPPQTVAAVDEEPISITTPLRSVEVAVPSPPSASRSLEVYEDPLTREQLTTPKLIFGPVLEDRSVNEDAAILQQAVRQQQEQQQQQQQQNGAANGMALSPEKLKQNQRLLDSGISKVQQRSLDVHGFRKLQGIIRDSDTKPTTGTALLTDDKFDALVAGLFDFLESPLTNLAPEKTQDVKAQVLATIKLLLKRTRASFQPHVSRGLESLLRARAVYEGRTHIVSGLELLAADLAGLGDASEIVLVLCRMLSDLDVDSAAHAAAGGVGGGAGRSLSMGLHVLREMLDARGAAFVPSDAELAALAALAGGCLESLESAVRMDAVLLCVALHARVGDARFWEALKGVKEDPKSLITYYIVKRQREVGAAGVGQAA</sequence>
<evidence type="ECO:0000250" key="1"/>
<evidence type="ECO:0000256" key="2">
    <source>
        <dbReference type="SAM" id="MobiDB-lite"/>
    </source>
</evidence>
<evidence type="ECO:0000305" key="3"/>
<dbReference type="EMBL" id="CH408032">
    <property type="protein sequence ID" value="EAQ87998.1"/>
    <property type="molecule type" value="Genomic_DNA"/>
</dbReference>
<dbReference type="RefSeq" id="XP_001223831.1">
    <property type="nucleotide sequence ID" value="XM_001223830.1"/>
</dbReference>
<dbReference type="STRING" id="306901.Q2H0S9"/>
<dbReference type="GeneID" id="4391605"/>
<dbReference type="VEuPathDB" id="FungiDB:CHGG_04617"/>
<dbReference type="eggNOG" id="ENOG502QT5T">
    <property type="taxonomic scope" value="Eukaryota"/>
</dbReference>
<dbReference type="HOGENOM" id="CLU_004060_0_0_1"/>
<dbReference type="InParanoid" id="Q2H0S9"/>
<dbReference type="OMA" id="GNAPHDF"/>
<dbReference type="OrthoDB" id="46159at2759"/>
<dbReference type="Proteomes" id="UP000001056">
    <property type="component" value="Unassembled WGS sequence"/>
</dbReference>
<dbReference type="GO" id="GO:0005881">
    <property type="term" value="C:cytoplasmic microtubule"/>
    <property type="evidence" value="ECO:0007669"/>
    <property type="project" value="TreeGrafter"/>
</dbReference>
<dbReference type="GO" id="GO:0005815">
    <property type="term" value="C:microtubule organizing center"/>
    <property type="evidence" value="ECO:0007669"/>
    <property type="project" value="TreeGrafter"/>
</dbReference>
<dbReference type="GO" id="GO:1990023">
    <property type="term" value="C:mitotic spindle midzone"/>
    <property type="evidence" value="ECO:0007669"/>
    <property type="project" value="TreeGrafter"/>
</dbReference>
<dbReference type="GO" id="GO:0005634">
    <property type="term" value="C:nucleus"/>
    <property type="evidence" value="ECO:0007669"/>
    <property type="project" value="UniProtKB-SubCell"/>
</dbReference>
<dbReference type="GO" id="GO:0005876">
    <property type="term" value="C:spindle microtubule"/>
    <property type="evidence" value="ECO:0007669"/>
    <property type="project" value="TreeGrafter"/>
</dbReference>
<dbReference type="GO" id="GO:0008017">
    <property type="term" value="F:microtubule binding"/>
    <property type="evidence" value="ECO:0007669"/>
    <property type="project" value="TreeGrafter"/>
</dbReference>
<dbReference type="GO" id="GO:0060172">
    <property type="term" value="P:astral microtubule depolymerization"/>
    <property type="evidence" value="ECO:0007669"/>
    <property type="project" value="TreeGrafter"/>
</dbReference>
<dbReference type="GO" id="GO:0051301">
    <property type="term" value="P:cell division"/>
    <property type="evidence" value="ECO:0007669"/>
    <property type="project" value="UniProtKB-KW"/>
</dbReference>
<dbReference type="GO" id="GO:0090307">
    <property type="term" value="P:mitotic spindle assembly"/>
    <property type="evidence" value="ECO:0007669"/>
    <property type="project" value="TreeGrafter"/>
</dbReference>
<dbReference type="Gene3D" id="1.25.10.10">
    <property type="entry name" value="Leucine-rich Repeat Variant"/>
    <property type="match status" value="3"/>
</dbReference>
<dbReference type="InterPro" id="IPR011989">
    <property type="entry name" value="ARM-like"/>
</dbReference>
<dbReference type="InterPro" id="IPR016024">
    <property type="entry name" value="ARM-type_fold"/>
</dbReference>
<dbReference type="InterPro" id="IPR024395">
    <property type="entry name" value="CLASP_N_dom"/>
</dbReference>
<dbReference type="InterPro" id="IPR034085">
    <property type="entry name" value="TOG"/>
</dbReference>
<dbReference type="PANTHER" id="PTHR21567">
    <property type="entry name" value="CLASP"/>
    <property type="match status" value="1"/>
</dbReference>
<dbReference type="PANTHER" id="PTHR21567:SF9">
    <property type="entry name" value="CLIP-ASSOCIATING PROTEIN"/>
    <property type="match status" value="1"/>
</dbReference>
<dbReference type="Pfam" id="PF12348">
    <property type="entry name" value="CLASP_N"/>
    <property type="match status" value="2"/>
</dbReference>
<dbReference type="SMART" id="SM01349">
    <property type="entry name" value="TOG"/>
    <property type="match status" value="2"/>
</dbReference>
<dbReference type="SUPFAM" id="SSF48371">
    <property type="entry name" value="ARM repeat"/>
    <property type="match status" value="1"/>
</dbReference>
<name>STU1_CHAGB</name>
<organism>
    <name type="scientific">Chaetomium globosum (strain ATCC 6205 / CBS 148.51 / DSM 1962 / NBRC 6347 / NRRL 1970)</name>
    <name type="common">Soil fungus</name>
    <dbReference type="NCBI Taxonomy" id="306901"/>
    <lineage>
        <taxon>Eukaryota</taxon>
        <taxon>Fungi</taxon>
        <taxon>Dikarya</taxon>
        <taxon>Ascomycota</taxon>
        <taxon>Pezizomycotina</taxon>
        <taxon>Sordariomycetes</taxon>
        <taxon>Sordariomycetidae</taxon>
        <taxon>Sordariales</taxon>
        <taxon>Chaetomiaceae</taxon>
        <taxon>Chaetomium</taxon>
    </lineage>
</organism>
<comment type="function">
    <text evidence="1">Microtubule binding protein that promotes the stabilization of dynamic microtubules. Required for mitotic spindle formation (By similarity).</text>
</comment>
<comment type="subunit">
    <text evidence="1">Interacts with microtubules.</text>
</comment>
<comment type="subcellular location">
    <subcellularLocation>
        <location evidence="1">Cytoplasm</location>
        <location evidence="1">Cytoskeleton</location>
    </subcellularLocation>
    <subcellularLocation>
        <location evidence="1">Nucleus</location>
    </subcellularLocation>
    <subcellularLocation>
        <location evidence="1">Cytoplasm</location>
        <location evidence="1">Cytoskeleton</location>
        <location evidence="1">Spindle</location>
    </subcellularLocation>
</comment>
<comment type="similarity">
    <text evidence="3">Belongs to the CLASP family.</text>
</comment>
<reference key="1">
    <citation type="journal article" date="2015" name="Genome Announc.">
        <title>Draft genome sequence of the cellulolytic fungus Chaetomium globosum.</title>
        <authorList>
            <person name="Cuomo C.A."/>
            <person name="Untereiner W.A."/>
            <person name="Ma L.-J."/>
            <person name="Grabherr M."/>
            <person name="Birren B.W."/>
        </authorList>
    </citation>
    <scope>NUCLEOTIDE SEQUENCE [LARGE SCALE GENOMIC DNA]</scope>
    <source>
        <strain>ATCC 6205 / CBS 148.51 / DSM 1962 / NBRC 6347 / NRRL 1970</strain>
    </source>
</reference>
<feature type="chain" id="PRO_0000272285" description="Protein STU1">
    <location>
        <begin position="1"/>
        <end position="1111"/>
    </location>
</feature>
<feature type="repeat" description="HEAT 1">
    <location>
        <begin position="95"/>
        <end position="133"/>
    </location>
</feature>
<feature type="repeat" description="HEAT 2">
    <location>
        <begin position="167"/>
        <end position="205"/>
    </location>
</feature>
<feature type="region of interest" description="Disordered" evidence="2">
    <location>
        <begin position="225"/>
        <end position="245"/>
    </location>
</feature>
<feature type="region of interest" description="Disordered" evidence="2">
    <location>
        <begin position="476"/>
        <end position="751"/>
    </location>
</feature>
<feature type="compositionally biased region" description="Polar residues" evidence="2">
    <location>
        <begin position="502"/>
        <end position="511"/>
    </location>
</feature>
<feature type="compositionally biased region" description="Basic and acidic residues" evidence="2">
    <location>
        <begin position="704"/>
        <end position="714"/>
    </location>
</feature>